<organism>
    <name type="scientific">Drosophila melanogaster</name>
    <name type="common">Fruit fly</name>
    <dbReference type="NCBI Taxonomy" id="7227"/>
    <lineage>
        <taxon>Eukaryota</taxon>
        <taxon>Metazoa</taxon>
        <taxon>Ecdysozoa</taxon>
        <taxon>Arthropoda</taxon>
        <taxon>Hexapoda</taxon>
        <taxon>Insecta</taxon>
        <taxon>Pterygota</taxon>
        <taxon>Neoptera</taxon>
        <taxon>Endopterygota</taxon>
        <taxon>Diptera</taxon>
        <taxon>Brachycera</taxon>
        <taxon>Muscomorpha</taxon>
        <taxon>Ephydroidea</taxon>
        <taxon>Drosophilidae</taxon>
        <taxon>Drosophila</taxon>
        <taxon>Sophophora</taxon>
    </lineage>
</organism>
<sequence length="610" mass="68787">METNVNPLAVILVYFDSKGDRLLYRYPYQTLGQTEVANDEQRKSRKRNPYAVANTDDLLQTPTHLGAAKSQGQLQGFADEVLSALFAVKPQLCNQKFELKLNDVRFVSHPTLIPQKEQRSGPMAKQQMLINIVFALHAQASYSIVKCYHELSKRLGLALKFEEQRSGYLTEQTAQMARTHDEQQQQPLERTLELIAERCSLAQALRSIFHDLCTTGLLSTSLNHNLTLCFCLPAKAHQLHKKGSMVDPETIDRCLRALKPYHGMLLLVDFAELLDCVPPTGARMLWQLVDVYDPLISLQSMSSNADLSIEHVYKLVSHLVYWAKATIIYPLCETNVYVIAPDAPLHTKSHLVEKFSARFAGMSLFEVISDFSLPTSIGHLTTPLQQPARQGILAQMVIWMLQHHLLMQLHTYVQFMPSEDEFGDSASCSNHLRDAISDEEGDQEPDADELHGSMLSMSSHPLPVPAVLVGGHRREASEDHSSLASDNIAVQPSSSHKSNFSITASMSTDNCDSLDSMEDEQKLKELLQVFSDADRAAIRRIPASANVDDLSLLVKLYQMGYFKSEHHLEEIMYFENLRRSQLLQLLDKFRDVLIIYETEDPAIASMYNTK</sequence>
<comment type="function">
    <text evidence="3 4 5 6 7">An essential component of the GATOR subcomplex GATOR1 which functions as an inhibitor of the amino acid-sensing branch of the TORC1 signaling pathway (PubMed:23723238, PubMed:25512509, PubMed:27166823). The two GATOR subcomplexes, GATOR1 and GATOR2, regulate the TORC1 pathway in order to mediate metabolic homeostasis, female gametogenesis and the response to amino acid limitation and complete starvation (PubMed:23723238, PubMed:25512509, PubMed:27166823). The function of GATOR1 in negatively regulating the TORC1 pathway is essential for maintaining baseline levels of TORC1 activity under nutrient rich conditions, and for promoting survival during amino acid or complete starvation by inhibiting TORC1-dependent cell growth and promoting catabolic metabolism and autophagy (PubMed:23723238, PubMed:27166823). In addition, this inhibition of TORC1 is necessary to maintain female fertility under normal conditions and during periods of nutrient stress (PubMed:24786828, PubMed:25512509, PubMed:27672113). GATOR1 and GATOR2 act at different stages of oogenesis to regulate TORC1 in order to control meiotic entry and promote oocyte growth and development (PubMed:25512509). After exactly four mitotic cyst divisions, the GATOR1 complex members (Iml1, Nprl2 and Nprl3) down-regulate TORC1 to slow cellular metabolism and promote the mitotic/meiotic transition (PubMed:25512509). At later stages of oogenesis, the mio and Nup44A components of the GATOR2 complex inhibit GATOR1 and thus activate TORC1 to promote meiotic progression, and drive oocyte growth and development (PubMed:25512509).</text>
</comment>
<comment type="subunit">
    <text evidence="4 6">Component of the GATOR complex consisting of mio, Nup44A/Seh1, Im11, Nplr3, Nplr2, Wdr24, Wdr59 and Sec13 (PubMed:27166823). Within the GATOR complex, probable component of the GATOR1 subcomplex which is likely composed of Iml1, Nplr2 and Nplr3 (PubMed:27166823). Interacts with Nprl2 (PubMed:24786828).</text>
</comment>
<comment type="interaction">
    <interactant intactId="EBI-113252">
        <id>Q9VUB4</id>
    </interactant>
    <interactant intactId="EBI-3407214">
        <id>Q9XZ25</id>
        <label>Wdr24</label>
    </interactant>
    <organismsDiffer>false</organismsDiffer>
    <experiments>2</experiments>
</comment>
<comment type="subcellular location">
    <subcellularLocation>
        <location evidence="4">Cytoplasm</location>
    </subcellularLocation>
    <subcellularLocation>
        <location evidence="4 5">Lysosome</location>
    </subcellularLocation>
    <text evidence="4">Localizes primarily to the autolysosomes during amino-acid starvation (PubMed:24786828).</text>
</comment>
<comment type="disruption phenotype">
    <text evidence="4 6 7">A high percentage of mutants die as pupae or pharate adults (PubMed:27166823, PubMed:27672113). Under nutrient-replete conditions, larvae display a significant increase in TORC1 activity (PubMed:27166823, PubMed:27672113). Adult escapers display a small but significant increase in body weight and a reduction in climbing (PubMed:27672113). Newly hatched males have a decreased tolerance to both complete starvation and amino acid starvation, likely due to decreased triacylglyceride (TAG) storage and the inability to down-regulate TORC1 activity and activate catabolic metabolism and autophagy (PubMed:27672113). Conditional RNAi-mediated knockdown in the female germline results in a small decrease in the rate of egg production when females are provided with a protein source of wet yeast (PubMed:24786828). Females starved of amino acids for a brief period have increased numbers of degenerating young eggs and show permanent loss of fertility (PubMed:24786828). Mid-stage egg chambers are unaffected (PubMed:24786828).</text>
</comment>
<comment type="similarity">
    <text evidence="8">Belongs to the NPR3 family.</text>
</comment>
<gene>
    <name evidence="9" type="primary">Nprl3</name>
    <name evidence="9" type="ORF">CG8783</name>
</gene>
<reference key="1">
    <citation type="journal article" date="2000" name="Science">
        <title>The genome sequence of Drosophila melanogaster.</title>
        <authorList>
            <person name="Adams M.D."/>
            <person name="Celniker S.E."/>
            <person name="Holt R.A."/>
            <person name="Evans C.A."/>
            <person name="Gocayne J.D."/>
            <person name="Amanatides P.G."/>
            <person name="Scherer S.E."/>
            <person name="Li P.W."/>
            <person name="Hoskins R.A."/>
            <person name="Galle R.F."/>
            <person name="George R.A."/>
            <person name="Lewis S.E."/>
            <person name="Richards S."/>
            <person name="Ashburner M."/>
            <person name="Henderson S.N."/>
            <person name="Sutton G.G."/>
            <person name="Wortman J.R."/>
            <person name="Yandell M.D."/>
            <person name="Zhang Q."/>
            <person name="Chen L.X."/>
            <person name="Brandon R.C."/>
            <person name="Rogers Y.-H.C."/>
            <person name="Blazej R.G."/>
            <person name="Champe M."/>
            <person name="Pfeiffer B.D."/>
            <person name="Wan K.H."/>
            <person name="Doyle C."/>
            <person name="Baxter E.G."/>
            <person name="Helt G."/>
            <person name="Nelson C.R."/>
            <person name="Miklos G.L.G."/>
            <person name="Abril J.F."/>
            <person name="Agbayani A."/>
            <person name="An H.-J."/>
            <person name="Andrews-Pfannkoch C."/>
            <person name="Baldwin D."/>
            <person name="Ballew R.M."/>
            <person name="Basu A."/>
            <person name="Baxendale J."/>
            <person name="Bayraktaroglu L."/>
            <person name="Beasley E.M."/>
            <person name="Beeson K.Y."/>
            <person name="Benos P.V."/>
            <person name="Berman B.P."/>
            <person name="Bhandari D."/>
            <person name="Bolshakov S."/>
            <person name="Borkova D."/>
            <person name="Botchan M.R."/>
            <person name="Bouck J."/>
            <person name="Brokstein P."/>
            <person name="Brottier P."/>
            <person name="Burtis K.C."/>
            <person name="Busam D.A."/>
            <person name="Butler H."/>
            <person name="Cadieu E."/>
            <person name="Center A."/>
            <person name="Chandra I."/>
            <person name="Cherry J.M."/>
            <person name="Cawley S."/>
            <person name="Dahlke C."/>
            <person name="Davenport L.B."/>
            <person name="Davies P."/>
            <person name="de Pablos B."/>
            <person name="Delcher A."/>
            <person name="Deng Z."/>
            <person name="Mays A.D."/>
            <person name="Dew I."/>
            <person name="Dietz S.M."/>
            <person name="Dodson K."/>
            <person name="Doup L.E."/>
            <person name="Downes M."/>
            <person name="Dugan-Rocha S."/>
            <person name="Dunkov B.C."/>
            <person name="Dunn P."/>
            <person name="Durbin K.J."/>
            <person name="Evangelista C.C."/>
            <person name="Ferraz C."/>
            <person name="Ferriera S."/>
            <person name="Fleischmann W."/>
            <person name="Fosler C."/>
            <person name="Gabrielian A.E."/>
            <person name="Garg N.S."/>
            <person name="Gelbart W.M."/>
            <person name="Glasser K."/>
            <person name="Glodek A."/>
            <person name="Gong F."/>
            <person name="Gorrell J.H."/>
            <person name="Gu Z."/>
            <person name="Guan P."/>
            <person name="Harris M."/>
            <person name="Harris N.L."/>
            <person name="Harvey D.A."/>
            <person name="Heiman T.J."/>
            <person name="Hernandez J.R."/>
            <person name="Houck J."/>
            <person name="Hostin D."/>
            <person name="Houston K.A."/>
            <person name="Howland T.J."/>
            <person name="Wei M.-H."/>
            <person name="Ibegwam C."/>
            <person name="Jalali M."/>
            <person name="Kalush F."/>
            <person name="Karpen G.H."/>
            <person name="Ke Z."/>
            <person name="Kennison J.A."/>
            <person name="Ketchum K.A."/>
            <person name="Kimmel B.E."/>
            <person name="Kodira C.D."/>
            <person name="Kraft C.L."/>
            <person name="Kravitz S."/>
            <person name="Kulp D."/>
            <person name="Lai Z."/>
            <person name="Lasko P."/>
            <person name="Lei Y."/>
            <person name="Levitsky A.A."/>
            <person name="Li J.H."/>
            <person name="Li Z."/>
            <person name="Liang Y."/>
            <person name="Lin X."/>
            <person name="Liu X."/>
            <person name="Mattei B."/>
            <person name="McIntosh T.C."/>
            <person name="McLeod M.P."/>
            <person name="McPherson D."/>
            <person name="Merkulov G."/>
            <person name="Milshina N.V."/>
            <person name="Mobarry C."/>
            <person name="Morris J."/>
            <person name="Moshrefi A."/>
            <person name="Mount S.M."/>
            <person name="Moy M."/>
            <person name="Murphy B."/>
            <person name="Murphy L."/>
            <person name="Muzny D.M."/>
            <person name="Nelson D.L."/>
            <person name="Nelson D.R."/>
            <person name="Nelson K.A."/>
            <person name="Nixon K."/>
            <person name="Nusskern D.R."/>
            <person name="Pacleb J.M."/>
            <person name="Palazzolo M."/>
            <person name="Pittman G.S."/>
            <person name="Pan S."/>
            <person name="Pollard J."/>
            <person name="Puri V."/>
            <person name="Reese M.G."/>
            <person name="Reinert K."/>
            <person name="Remington K."/>
            <person name="Saunders R.D.C."/>
            <person name="Scheeler F."/>
            <person name="Shen H."/>
            <person name="Shue B.C."/>
            <person name="Siden-Kiamos I."/>
            <person name="Simpson M."/>
            <person name="Skupski M.P."/>
            <person name="Smith T.J."/>
            <person name="Spier E."/>
            <person name="Spradling A.C."/>
            <person name="Stapleton M."/>
            <person name="Strong R."/>
            <person name="Sun E."/>
            <person name="Svirskas R."/>
            <person name="Tector C."/>
            <person name="Turner R."/>
            <person name="Venter E."/>
            <person name="Wang A.H."/>
            <person name="Wang X."/>
            <person name="Wang Z.-Y."/>
            <person name="Wassarman D.A."/>
            <person name="Weinstock G.M."/>
            <person name="Weissenbach J."/>
            <person name="Williams S.M."/>
            <person name="Woodage T."/>
            <person name="Worley K.C."/>
            <person name="Wu D."/>
            <person name="Yang S."/>
            <person name="Yao Q.A."/>
            <person name="Ye J."/>
            <person name="Yeh R.-F."/>
            <person name="Zaveri J.S."/>
            <person name="Zhan M."/>
            <person name="Zhang G."/>
            <person name="Zhao Q."/>
            <person name="Zheng L."/>
            <person name="Zheng X.H."/>
            <person name="Zhong F.N."/>
            <person name="Zhong W."/>
            <person name="Zhou X."/>
            <person name="Zhu S.C."/>
            <person name="Zhu X."/>
            <person name="Smith H.O."/>
            <person name="Gibbs R.A."/>
            <person name="Myers E.W."/>
            <person name="Rubin G.M."/>
            <person name="Venter J.C."/>
        </authorList>
    </citation>
    <scope>NUCLEOTIDE SEQUENCE [LARGE SCALE GENOMIC DNA]</scope>
    <source>
        <strain>Berkeley</strain>
    </source>
</reference>
<reference key="2">
    <citation type="journal article" date="2002" name="Genome Biol.">
        <title>Annotation of the Drosophila melanogaster euchromatic genome: a systematic review.</title>
        <authorList>
            <person name="Misra S."/>
            <person name="Crosby M.A."/>
            <person name="Mungall C.J."/>
            <person name="Matthews B.B."/>
            <person name="Campbell K.S."/>
            <person name="Hradecky P."/>
            <person name="Huang Y."/>
            <person name="Kaminker J.S."/>
            <person name="Millburn G.H."/>
            <person name="Prochnik S.E."/>
            <person name="Smith C.D."/>
            <person name="Tupy J.L."/>
            <person name="Whitfield E.J."/>
            <person name="Bayraktaroglu L."/>
            <person name="Berman B.P."/>
            <person name="Bettencourt B.R."/>
            <person name="Celniker S.E."/>
            <person name="de Grey A.D.N.J."/>
            <person name="Drysdale R.A."/>
            <person name="Harris N.L."/>
            <person name="Richter J."/>
            <person name="Russo S."/>
            <person name="Schroeder A.J."/>
            <person name="Shu S.Q."/>
            <person name="Stapleton M."/>
            <person name="Yamada C."/>
            <person name="Ashburner M."/>
            <person name="Gelbart W.M."/>
            <person name="Rubin G.M."/>
            <person name="Lewis S.E."/>
        </authorList>
    </citation>
    <scope>GENOME REANNOTATION</scope>
    <source>
        <strain>Berkeley</strain>
    </source>
</reference>
<reference key="3">
    <citation type="journal article" date="2002" name="Genome Biol.">
        <title>A Drosophila full-length cDNA resource.</title>
        <authorList>
            <person name="Stapleton M."/>
            <person name="Carlson J.W."/>
            <person name="Brokstein P."/>
            <person name="Yu C."/>
            <person name="Champe M."/>
            <person name="George R.A."/>
            <person name="Guarin H."/>
            <person name="Kronmiller B."/>
            <person name="Pacleb J.M."/>
            <person name="Park S."/>
            <person name="Wan K.H."/>
            <person name="Rubin G.M."/>
            <person name="Celniker S.E."/>
        </authorList>
    </citation>
    <scope>NUCLEOTIDE SEQUENCE [LARGE SCALE MRNA]</scope>
    <source>
        <strain>Berkeley</strain>
        <tissue>Embryo</tissue>
    </source>
</reference>
<reference key="4">
    <citation type="journal article" date="2008" name="J. Proteome Res.">
        <title>Phosphoproteome analysis of Drosophila melanogaster embryos.</title>
        <authorList>
            <person name="Zhai B."/>
            <person name="Villen J."/>
            <person name="Beausoleil S.A."/>
            <person name="Mintseris J."/>
            <person name="Gygi S.P."/>
        </authorList>
    </citation>
    <scope>PHOSPHORYLATION [LARGE SCALE ANALYSIS] AT SER-437</scope>
    <scope>IDENTIFICATION BY MASS SPECTROMETRY</scope>
    <source>
        <tissue>Embryo</tissue>
    </source>
</reference>
<reference key="5">
    <citation type="journal article" date="2013" name="Science">
        <title>A Tumor suppressor complex with GAP activity for the Rag GTPases that signal amino acid sufficiency to mTORC1.</title>
        <authorList>
            <person name="Bar-Peled L."/>
            <person name="Chantranupong L."/>
            <person name="Cherniack A.D."/>
            <person name="Chen W.W."/>
            <person name="Ottina K.A."/>
            <person name="Grabiner B.C."/>
            <person name="Spear E.D."/>
            <person name="Carter S.L."/>
            <person name="Meyerson M."/>
            <person name="Sabatini D.M."/>
        </authorList>
    </citation>
    <scope>FUNCTION</scope>
</reference>
<reference key="6">
    <citation type="journal article" date="2014" name="Cell Death Differ.">
        <title>The TORC1 inhibitors Nprl2 and Nprl3 mediate an adaptive response to amino-acid starvation in Drosophila.</title>
        <authorList>
            <person name="Wei Y."/>
            <person name="Lilly M.A."/>
        </authorList>
    </citation>
    <scope>FUNCTION</scope>
    <scope>INTERACTION WITH NPRL2</scope>
    <scope>SUBCELLULAR LOCATION</scope>
    <scope>DISRUPTION PHENOTYPE</scope>
</reference>
<reference key="7">
    <citation type="journal article" date="2014" name="Proc. Natl. Acad. Sci. U.S.A.">
        <title>TORC1 regulators Iml1/GATOR1 and GATOR2 control meiotic entry and oocyte development in Drosophila.</title>
        <authorList>
            <person name="Wei Y."/>
            <person name="Reveal B."/>
            <person name="Reich J."/>
            <person name="Laursen W.J."/>
            <person name="Senger S."/>
            <person name="Akbar T."/>
            <person name="Iida-Jones T."/>
            <person name="Cai W."/>
            <person name="Jarnik M."/>
            <person name="Lilly M.A."/>
        </authorList>
    </citation>
    <scope>FUNCTION</scope>
    <scope>SUBCELLULAR LOCATION</scope>
</reference>
<reference key="8">
    <citation type="journal article" date="2016" name="G3 (Bethesda)">
        <title>The GATOR1 Complex Regulates Metabolic Homeostasis and the Response to Nutrient Stress in Drosophila melanogaster.</title>
        <authorList>
            <person name="Wei Y."/>
            <person name="Reveal B."/>
            <person name="Cai W."/>
            <person name="Lilly M.A."/>
        </authorList>
    </citation>
    <scope>FUNCTION</scope>
    <scope>DISRUPTION PHENOTYPE</scope>
</reference>
<reference key="9">
    <citation type="journal article" date="2016" name="PLoS Genet.">
        <title>The GATOR2 component Wdr24 regulates TORC1 activity and lysosome function.</title>
        <authorList>
            <person name="Cai W."/>
            <person name="Wei Y."/>
            <person name="Jarnik M."/>
            <person name="Reich J."/>
            <person name="Lilly M.A."/>
        </authorList>
    </citation>
    <scope>FUNCTION</scope>
    <scope>IDENTIFICATION IN THE GATOR COMPLEX</scope>
    <scope>INTERACTION WITH WDR24</scope>
    <scope>DISRUPTION PHENOTYPE</scope>
</reference>
<accession>Q9VUB4</accession>
<accession>A4V1X9</accession>
<accession>Q95RI3</accession>
<keyword id="KW-0131">Cell cycle</keyword>
<keyword id="KW-0132">Cell division</keyword>
<keyword id="KW-0963">Cytoplasm</keyword>
<keyword id="KW-0458">Lysosome</keyword>
<keyword id="KW-0469">Meiosis</keyword>
<keyword id="KW-0498">Mitosis</keyword>
<keyword id="KW-0597">Phosphoprotein</keyword>
<keyword id="KW-1185">Reference proteome</keyword>
<evidence type="ECO:0000256" key="1">
    <source>
        <dbReference type="SAM" id="MobiDB-lite"/>
    </source>
</evidence>
<evidence type="ECO:0000269" key="2">
    <source>
    </source>
</evidence>
<evidence type="ECO:0000269" key="3">
    <source>
    </source>
</evidence>
<evidence type="ECO:0000269" key="4">
    <source>
    </source>
</evidence>
<evidence type="ECO:0000269" key="5">
    <source>
    </source>
</evidence>
<evidence type="ECO:0000269" key="6">
    <source>
    </source>
</evidence>
<evidence type="ECO:0000269" key="7">
    <source>
    </source>
</evidence>
<evidence type="ECO:0000305" key="8"/>
<evidence type="ECO:0000312" key="9">
    <source>
        <dbReference type="FlyBase" id="FBgn0036397"/>
    </source>
</evidence>
<dbReference type="EMBL" id="AE014296">
    <property type="protein sequence ID" value="AAF49774.1"/>
    <property type="molecule type" value="Genomic_DNA"/>
</dbReference>
<dbReference type="EMBL" id="AE014296">
    <property type="protein sequence ID" value="AAN11821.1"/>
    <property type="molecule type" value="Genomic_DNA"/>
</dbReference>
<dbReference type="EMBL" id="AY061356">
    <property type="protein sequence ID" value="AAL28904.1"/>
    <property type="molecule type" value="mRNA"/>
</dbReference>
<dbReference type="RefSeq" id="NP_001261818.1">
    <property type="nucleotide sequence ID" value="NM_001274889.1"/>
</dbReference>
<dbReference type="RefSeq" id="NP_648680.2">
    <property type="nucleotide sequence ID" value="NM_140423.3"/>
</dbReference>
<dbReference type="RefSeq" id="NP_729945.1">
    <property type="nucleotide sequence ID" value="NM_168570.1"/>
</dbReference>
<dbReference type="SMR" id="Q9VUB4"/>
<dbReference type="BioGRID" id="64889">
    <property type="interactions" value="8"/>
</dbReference>
<dbReference type="ComplexPortal" id="CPX-2781">
    <property type="entry name" value="GATOR1 complex"/>
</dbReference>
<dbReference type="DIP" id="DIP-23525N"/>
<dbReference type="FunCoup" id="Q9VUB4">
    <property type="interactions" value="1450"/>
</dbReference>
<dbReference type="IntAct" id="Q9VUB4">
    <property type="interactions" value="8"/>
</dbReference>
<dbReference type="STRING" id="7227.FBpp0075528"/>
<dbReference type="GlyGen" id="Q9VUB4">
    <property type="glycosylation" value="1 site"/>
</dbReference>
<dbReference type="iPTMnet" id="Q9VUB4"/>
<dbReference type="PaxDb" id="7227-FBpp0075527"/>
<dbReference type="DNASU" id="39550"/>
<dbReference type="EnsemblMetazoa" id="FBtr0075785">
    <property type="protein sequence ID" value="FBpp0075527"/>
    <property type="gene ID" value="FBgn0036397"/>
</dbReference>
<dbReference type="EnsemblMetazoa" id="FBtr0075786">
    <property type="protein sequence ID" value="FBpp0075528"/>
    <property type="gene ID" value="FBgn0036397"/>
</dbReference>
<dbReference type="EnsemblMetazoa" id="FBtr0333025">
    <property type="protein sequence ID" value="FBpp0305239"/>
    <property type="gene ID" value="FBgn0036397"/>
</dbReference>
<dbReference type="GeneID" id="39550"/>
<dbReference type="KEGG" id="dme:Dmel_CG8783"/>
<dbReference type="UCSC" id="CG8783-RA">
    <property type="organism name" value="d. melanogaster"/>
</dbReference>
<dbReference type="AGR" id="FB:FBgn0036397"/>
<dbReference type="CTD" id="8131"/>
<dbReference type="FlyBase" id="FBgn0036397">
    <property type="gene designation" value="Nprl3"/>
</dbReference>
<dbReference type="VEuPathDB" id="VectorBase:FBgn0036397"/>
<dbReference type="eggNOG" id="KOG3830">
    <property type="taxonomic scope" value="Eukaryota"/>
</dbReference>
<dbReference type="GeneTree" id="ENSGT00390000015916"/>
<dbReference type="HOGENOM" id="CLU_014030_1_0_1"/>
<dbReference type="InParanoid" id="Q9VUB4"/>
<dbReference type="OMA" id="CNLAFRY"/>
<dbReference type="OrthoDB" id="18648at2759"/>
<dbReference type="PhylomeDB" id="Q9VUB4"/>
<dbReference type="BioGRID-ORCS" id="39550">
    <property type="hits" value="1 hit in 1 CRISPR screen"/>
</dbReference>
<dbReference type="GenomeRNAi" id="39550"/>
<dbReference type="PRO" id="PR:Q9VUB4"/>
<dbReference type="Proteomes" id="UP000000803">
    <property type="component" value="Chromosome 3L"/>
</dbReference>
<dbReference type="Bgee" id="FBgn0036397">
    <property type="expression patterns" value="Expressed in cleaving embryo and 51 other cell types or tissues"/>
</dbReference>
<dbReference type="ExpressionAtlas" id="Q9VUB4">
    <property type="expression patterns" value="baseline and differential"/>
</dbReference>
<dbReference type="GO" id="GO:0044754">
    <property type="term" value="C:autolysosome"/>
    <property type="evidence" value="ECO:0000314"/>
    <property type="project" value="FlyBase"/>
</dbReference>
<dbReference type="GO" id="GO:0005737">
    <property type="term" value="C:cytoplasm"/>
    <property type="evidence" value="ECO:0000314"/>
    <property type="project" value="FlyBase"/>
</dbReference>
<dbReference type="GO" id="GO:1990130">
    <property type="term" value="C:GATOR1 complex"/>
    <property type="evidence" value="ECO:0000318"/>
    <property type="project" value="GO_Central"/>
</dbReference>
<dbReference type="GO" id="GO:0061700">
    <property type="term" value="C:GATOR2 complex"/>
    <property type="evidence" value="ECO:0000314"/>
    <property type="project" value="UniProtKB"/>
</dbReference>
<dbReference type="GO" id="GO:0005764">
    <property type="term" value="C:lysosome"/>
    <property type="evidence" value="ECO:0000314"/>
    <property type="project" value="UniProtKB"/>
</dbReference>
<dbReference type="GO" id="GO:0005634">
    <property type="term" value="C:nucleus"/>
    <property type="evidence" value="ECO:0000314"/>
    <property type="project" value="FlyBase"/>
</dbReference>
<dbReference type="GO" id="GO:0035859">
    <property type="term" value="C:Seh1-associated complex"/>
    <property type="evidence" value="ECO:0000314"/>
    <property type="project" value="FlyBase"/>
</dbReference>
<dbReference type="GO" id="GO:0051301">
    <property type="term" value="P:cell division"/>
    <property type="evidence" value="ECO:0007669"/>
    <property type="project" value="UniProtKB-KW"/>
</dbReference>
<dbReference type="GO" id="GO:0034198">
    <property type="term" value="P:cellular response to amino acid starvation"/>
    <property type="evidence" value="ECO:0000315"/>
    <property type="project" value="UniProtKB"/>
</dbReference>
<dbReference type="GO" id="GO:0009267">
    <property type="term" value="P:cellular response to starvation"/>
    <property type="evidence" value="ECO:0000315"/>
    <property type="project" value="FlyBase"/>
</dbReference>
<dbReference type="GO" id="GO:0007293">
    <property type="term" value="P:germarium-derived egg chamber formation"/>
    <property type="evidence" value="ECO:0000316"/>
    <property type="project" value="FlyBase"/>
</dbReference>
<dbReference type="GO" id="GO:0051321">
    <property type="term" value="P:meiotic cell cycle"/>
    <property type="evidence" value="ECO:0007669"/>
    <property type="project" value="UniProtKB-KW"/>
</dbReference>
<dbReference type="GO" id="GO:0045792">
    <property type="term" value="P:negative regulation of cell size"/>
    <property type="evidence" value="ECO:0000315"/>
    <property type="project" value="FlyBase"/>
</dbReference>
<dbReference type="GO" id="GO:0032007">
    <property type="term" value="P:negative regulation of TOR signaling"/>
    <property type="evidence" value="ECO:0000315"/>
    <property type="project" value="UniProtKB"/>
</dbReference>
<dbReference type="GO" id="GO:1904262">
    <property type="term" value="P:negative regulation of TORC1 signaling"/>
    <property type="evidence" value="ECO:0000315"/>
    <property type="project" value="UniProtKB"/>
</dbReference>
<dbReference type="GO" id="GO:0048477">
    <property type="term" value="P:oogenesis"/>
    <property type="evidence" value="ECO:0000315"/>
    <property type="project" value="FlyBase"/>
</dbReference>
<dbReference type="GO" id="GO:0010508">
    <property type="term" value="P:positive regulation of autophagy"/>
    <property type="evidence" value="ECO:0000318"/>
    <property type="project" value="GO_Central"/>
</dbReference>
<dbReference type="GO" id="GO:0016239">
    <property type="term" value="P:positive regulation of macroautophagy"/>
    <property type="evidence" value="ECO:0000316"/>
    <property type="project" value="FlyBase"/>
</dbReference>
<dbReference type="GO" id="GO:0010898">
    <property type="term" value="P:positive regulation of triglyceride catabolic process"/>
    <property type="evidence" value="ECO:0000315"/>
    <property type="project" value="FlyBase"/>
</dbReference>
<dbReference type="InterPro" id="IPR056603">
    <property type="entry name" value="HTH_NPRL3"/>
</dbReference>
<dbReference type="InterPro" id="IPR005365">
    <property type="entry name" value="Npr3"/>
</dbReference>
<dbReference type="PANTHER" id="PTHR13153">
    <property type="entry name" value="CGTHBA PROTEIN -14 GENE PROTEIN"/>
    <property type="match status" value="1"/>
</dbReference>
<dbReference type="PANTHER" id="PTHR13153:SF5">
    <property type="entry name" value="GATOR COMPLEX PROTEIN NPRL3"/>
    <property type="match status" value="1"/>
</dbReference>
<dbReference type="Pfam" id="PF24064">
    <property type="entry name" value="HTH_NPRL3"/>
    <property type="match status" value="1"/>
</dbReference>
<dbReference type="Pfam" id="PF03666">
    <property type="entry name" value="NPR3"/>
    <property type="match status" value="1"/>
</dbReference>
<name>NPRL3_DROME</name>
<protein>
    <recommendedName>
        <fullName evidence="8">GATOR complex protein NPRL3</fullName>
    </recommendedName>
    <alternativeName>
        <fullName>Nitrogen permease regulator 3-like protein</fullName>
    </alternativeName>
</protein>
<feature type="chain" id="PRO_0000220639" description="GATOR complex protein NPRL3">
    <location>
        <begin position="1"/>
        <end position="610"/>
    </location>
</feature>
<feature type="region of interest" description="Disordered" evidence="1">
    <location>
        <begin position="474"/>
        <end position="501"/>
    </location>
</feature>
<feature type="compositionally biased region" description="Polar residues" evidence="1">
    <location>
        <begin position="482"/>
        <end position="501"/>
    </location>
</feature>
<feature type="modified residue" description="Phosphoserine" evidence="2">
    <location>
        <position position="437"/>
    </location>
</feature>
<feature type="sequence conflict" description="In Ref. 3; AAL28904." evidence="8" ref="3">
    <original>R</original>
    <variation>S</variation>
    <location>
        <position position="590"/>
    </location>
</feature>
<proteinExistence type="evidence at protein level"/>